<reference key="1">
    <citation type="journal article" date="2005" name="Science">
        <title>Life at depth: Photobacterium profundum genome sequence and expression analysis.</title>
        <authorList>
            <person name="Vezzi A."/>
            <person name="Campanaro S."/>
            <person name="D'Angelo M."/>
            <person name="Simonato F."/>
            <person name="Vitulo N."/>
            <person name="Lauro F.M."/>
            <person name="Cestaro A."/>
            <person name="Malacrida G."/>
            <person name="Simionati B."/>
            <person name="Cannata N."/>
            <person name="Romualdi C."/>
            <person name="Bartlett D.H."/>
            <person name="Valle G."/>
        </authorList>
    </citation>
    <scope>NUCLEOTIDE SEQUENCE [LARGE SCALE GENOMIC DNA]</scope>
    <source>
        <strain>ATCC BAA-1253 / SS9</strain>
    </source>
</reference>
<feature type="chain" id="PRO_0000227112" description="Glycine dehydrogenase (decarboxylating)">
    <location>
        <begin position="1"/>
        <end position="959"/>
    </location>
</feature>
<feature type="modified residue" description="N6-(pyridoxal phosphate)lysine" evidence="1">
    <location>
        <position position="707"/>
    </location>
</feature>
<evidence type="ECO:0000255" key="1">
    <source>
        <dbReference type="HAMAP-Rule" id="MF_00711"/>
    </source>
</evidence>
<organism>
    <name type="scientific">Photobacterium profundum (strain SS9)</name>
    <dbReference type="NCBI Taxonomy" id="298386"/>
    <lineage>
        <taxon>Bacteria</taxon>
        <taxon>Pseudomonadati</taxon>
        <taxon>Pseudomonadota</taxon>
        <taxon>Gammaproteobacteria</taxon>
        <taxon>Vibrionales</taxon>
        <taxon>Vibrionaceae</taxon>
        <taxon>Photobacterium</taxon>
    </lineage>
</organism>
<proteinExistence type="inferred from homology"/>
<sequence>MTDMTLLNALSDDQDFAGRHNGPNAAQQNIMLKAISAESVEQLIAQTVPADIRLPEPMKLDPAQSEADMLTSLKAIASKNIINRSYIGQGYYNNLTPNVVLRNVLENPGWYTAYTPYQPEISQGRLESLLNYQQMIMDLTSMELANASLLDEATAAAEAMTLCLRAGKSKSKAFFVSNDLHPQTVDVVRTRAEYIGIEIITGSVEELDNHDVFGALVQYPGTTGSITDLTDIIEKAHAKKTLVAVASDLLALTLLKAPGEMGADVVIGSAQRFGVPMGFGGPHAGFMATKDKHKRTMPGRVIGVSKDARGNQSLRMAMQTREQHIRREKATSNICTAQALLANMAAFYALYHGPEGLRKIGRRVHHLTAILAAGLRNSGIELASDTFFDTITLNTGKKTDDFYKKALAAGINLRKFDVQLGISLDETTKVSDVEELLAIFTGNKLKASMFTADIAADEFAAIPESCRRTSKYLTHPVFNEHHSETQMMRYMKKLENKDYSLTHGMIPLGSCTMKLNAAAEMIPITWPEFGSLHPFAPADQTKGYQELASKLSEMLCSVTGYDAFSLQPNSGAQGEYAGLIAIQRYHQHNGDSHRNVCLIPSSAHGTNPASAAMVSMKVVVVGCDEKGNVDVEDLKVKIEKHRDNLSCIMITYPSTHGVYEEAVREVCDLVHDAGGQVYLDGANMNAQVGLTNPGFIGSDVSHLNLHKTFCIPHGGGGPGMGPIGVKSHLAPFLPGHVQSTSDEGQQYAVSAAELGSASILPISYAYIAMMGEEGLTEATKLAILNANYVMERLRPHYPVLYRGTEGRIAHECIIDIRPLKEASGISEEDVAKRLMDYGFHAPTMSFPVAGTLMIEPTESEDLAELDRFCDAMIAIRQEIARVQEGEWPIDDNPLVHAPHTQADLMETEWNRAYSREIACFPTDHTRASKYWPTVNRVDNVFGDRNLICSCPSIDSYIED</sequence>
<accession>Q6LHN5</accession>
<comment type="function">
    <text evidence="1">The glycine cleavage system catalyzes the degradation of glycine. The P protein binds the alpha-amino group of glycine through its pyridoxal phosphate cofactor; CO(2) is released and the remaining methylamine moiety is then transferred to the lipoamide cofactor of the H protein.</text>
</comment>
<comment type="catalytic activity">
    <reaction evidence="1">
        <text>N(6)-[(R)-lipoyl]-L-lysyl-[glycine-cleavage complex H protein] + glycine + H(+) = N(6)-[(R)-S(8)-aminomethyldihydrolipoyl]-L-lysyl-[glycine-cleavage complex H protein] + CO2</text>
        <dbReference type="Rhea" id="RHEA:24304"/>
        <dbReference type="Rhea" id="RHEA-COMP:10494"/>
        <dbReference type="Rhea" id="RHEA-COMP:10495"/>
        <dbReference type="ChEBI" id="CHEBI:15378"/>
        <dbReference type="ChEBI" id="CHEBI:16526"/>
        <dbReference type="ChEBI" id="CHEBI:57305"/>
        <dbReference type="ChEBI" id="CHEBI:83099"/>
        <dbReference type="ChEBI" id="CHEBI:83143"/>
        <dbReference type="EC" id="1.4.4.2"/>
    </reaction>
</comment>
<comment type="cofactor">
    <cofactor evidence="1">
        <name>pyridoxal 5'-phosphate</name>
        <dbReference type="ChEBI" id="CHEBI:597326"/>
    </cofactor>
</comment>
<comment type="subunit">
    <text evidence="1">The glycine cleavage system is composed of four proteins: P, T, L and H.</text>
</comment>
<comment type="similarity">
    <text evidence="1">Belongs to the GcvP family.</text>
</comment>
<dbReference type="EC" id="1.4.4.2" evidence="1"/>
<dbReference type="EMBL" id="CR378679">
    <property type="protein sequence ID" value="CAG23195.1"/>
    <property type="molecule type" value="Genomic_DNA"/>
</dbReference>
<dbReference type="RefSeq" id="WP_011221376.1">
    <property type="nucleotide sequence ID" value="NC_006371.1"/>
</dbReference>
<dbReference type="SMR" id="Q6LHN5"/>
<dbReference type="STRING" id="298386.PBPRB1324"/>
<dbReference type="KEGG" id="ppr:PBPRB1324"/>
<dbReference type="eggNOG" id="COG0403">
    <property type="taxonomic scope" value="Bacteria"/>
</dbReference>
<dbReference type="eggNOG" id="COG1003">
    <property type="taxonomic scope" value="Bacteria"/>
</dbReference>
<dbReference type="HOGENOM" id="CLU_004620_1_1_6"/>
<dbReference type="Proteomes" id="UP000000593">
    <property type="component" value="Chromosome 2"/>
</dbReference>
<dbReference type="GO" id="GO:0005829">
    <property type="term" value="C:cytosol"/>
    <property type="evidence" value="ECO:0007669"/>
    <property type="project" value="TreeGrafter"/>
</dbReference>
<dbReference type="GO" id="GO:0005960">
    <property type="term" value="C:glycine cleavage complex"/>
    <property type="evidence" value="ECO:0007669"/>
    <property type="project" value="TreeGrafter"/>
</dbReference>
<dbReference type="GO" id="GO:0016594">
    <property type="term" value="F:glycine binding"/>
    <property type="evidence" value="ECO:0007669"/>
    <property type="project" value="TreeGrafter"/>
</dbReference>
<dbReference type="GO" id="GO:0004375">
    <property type="term" value="F:glycine dehydrogenase (decarboxylating) activity"/>
    <property type="evidence" value="ECO:0007669"/>
    <property type="project" value="UniProtKB-EC"/>
</dbReference>
<dbReference type="GO" id="GO:0030170">
    <property type="term" value="F:pyridoxal phosphate binding"/>
    <property type="evidence" value="ECO:0007669"/>
    <property type="project" value="TreeGrafter"/>
</dbReference>
<dbReference type="GO" id="GO:0019464">
    <property type="term" value="P:glycine decarboxylation via glycine cleavage system"/>
    <property type="evidence" value="ECO:0007669"/>
    <property type="project" value="UniProtKB-UniRule"/>
</dbReference>
<dbReference type="CDD" id="cd00613">
    <property type="entry name" value="GDC-P"/>
    <property type="match status" value="2"/>
</dbReference>
<dbReference type="FunFam" id="3.40.640.10:FF:000005">
    <property type="entry name" value="Glycine dehydrogenase (decarboxylating), mitochondrial"/>
    <property type="match status" value="1"/>
</dbReference>
<dbReference type="FunFam" id="3.90.1150.10:FF:000007">
    <property type="entry name" value="Glycine dehydrogenase (decarboxylating), mitochondrial"/>
    <property type="match status" value="1"/>
</dbReference>
<dbReference type="FunFam" id="3.40.640.10:FF:000007">
    <property type="entry name" value="glycine dehydrogenase (Decarboxylating), mitochondrial"/>
    <property type="match status" value="1"/>
</dbReference>
<dbReference type="Gene3D" id="3.90.1150.10">
    <property type="entry name" value="Aspartate Aminotransferase, domain 1"/>
    <property type="match status" value="2"/>
</dbReference>
<dbReference type="Gene3D" id="3.40.640.10">
    <property type="entry name" value="Type I PLP-dependent aspartate aminotransferase-like (Major domain)"/>
    <property type="match status" value="2"/>
</dbReference>
<dbReference type="HAMAP" id="MF_00711">
    <property type="entry name" value="GcvP"/>
    <property type="match status" value="1"/>
</dbReference>
<dbReference type="InterPro" id="IPR003437">
    <property type="entry name" value="GcvP"/>
</dbReference>
<dbReference type="InterPro" id="IPR049316">
    <property type="entry name" value="GDC-P_C"/>
</dbReference>
<dbReference type="InterPro" id="IPR049315">
    <property type="entry name" value="GDC-P_N"/>
</dbReference>
<dbReference type="InterPro" id="IPR020581">
    <property type="entry name" value="GDC_P"/>
</dbReference>
<dbReference type="InterPro" id="IPR015424">
    <property type="entry name" value="PyrdxlP-dep_Trfase"/>
</dbReference>
<dbReference type="InterPro" id="IPR015421">
    <property type="entry name" value="PyrdxlP-dep_Trfase_major"/>
</dbReference>
<dbReference type="InterPro" id="IPR015422">
    <property type="entry name" value="PyrdxlP-dep_Trfase_small"/>
</dbReference>
<dbReference type="NCBIfam" id="TIGR00461">
    <property type="entry name" value="gcvP"/>
    <property type="match status" value="1"/>
</dbReference>
<dbReference type="NCBIfam" id="NF003346">
    <property type="entry name" value="PRK04366.1"/>
    <property type="match status" value="1"/>
</dbReference>
<dbReference type="PANTHER" id="PTHR11773:SF13">
    <property type="entry name" value="GLYCINE DEHYDROGENASE (DECARBOXYLATING)"/>
    <property type="match status" value="1"/>
</dbReference>
<dbReference type="PANTHER" id="PTHR11773">
    <property type="entry name" value="GLYCINE DEHYDROGENASE, DECARBOXYLATING"/>
    <property type="match status" value="1"/>
</dbReference>
<dbReference type="Pfam" id="PF21478">
    <property type="entry name" value="GcvP2_C"/>
    <property type="match status" value="1"/>
</dbReference>
<dbReference type="Pfam" id="PF02347">
    <property type="entry name" value="GDC-P"/>
    <property type="match status" value="2"/>
</dbReference>
<dbReference type="SUPFAM" id="SSF53383">
    <property type="entry name" value="PLP-dependent transferases"/>
    <property type="match status" value="2"/>
</dbReference>
<gene>
    <name evidence="1" type="primary">gcvP</name>
    <name type="ordered locus">PBPRB1324</name>
</gene>
<name>GCSP_PHOPR</name>
<protein>
    <recommendedName>
        <fullName evidence="1">Glycine dehydrogenase (decarboxylating)</fullName>
        <ecNumber evidence="1">1.4.4.2</ecNumber>
    </recommendedName>
    <alternativeName>
        <fullName evidence="1">Glycine cleavage system P-protein</fullName>
    </alternativeName>
    <alternativeName>
        <fullName evidence="1">Glycine decarboxylase</fullName>
    </alternativeName>
    <alternativeName>
        <fullName evidence="1">Glycine dehydrogenase (aminomethyl-transferring)</fullName>
    </alternativeName>
</protein>
<keyword id="KW-0560">Oxidoreductase</keyword>
<keyword id="KW-0663">Pyridoxal phosphate</keyword>
<keyword id="KW-1185">Reference proteome</keyword>